<proteinExistence type="inferred from homology"/>
<dbReference type="EMBL" id="X72969">
    <property type="protein sequence ID" value="CAA51476.1"/>
    <property type="molecule type" value="Genomic_DNA"/>
</dbReference>
<dbReference type="PIR" id="S35276">
    <property type="entry name" value="S35276"/>
</dbReference>
<dbReference type="SMR" id="P34200"/>
<dbReference type="GO" id="GO:0009425">
    <property type="term" value="C:bacterial-type flagellum basal body"/>
    <property type="evidence" value="ECO:0007669"/>
    <property type="project" value="UniProtKB-SubCell"/>
</dbReference>
<dbReference type="GO" id="GO:0005886">
    <property type="term" value="C:plasma membrane"/>
    <property type="evidence" value="ECO:0007669"/>
    <property type="project" value="UniProtKB-SubCell"/>
</dbReference>
<dbReference type="GO" id="GO:0044781">
    <property type="term" value="P:bacterial-type flagellum organization"/>
    <property type="evidence" value="ECO:0007669"/>
    <property type="project" value="UniProtKB-KW"/>
</dbReference>
<dbReference type="GO" id="GO:0009306">
    <property type="term" value="P:protein secretion"/>
    <property type="evidence" value="ECO:0007669"/>
    <property type="project" value="InterPro"/>
</dbReference>
<dbReference type="InterPro" id="IPR005837">
    <property type="entry name" value="FliP"/>
</dbReference>
<dbReference type="InterPro" id="IPR005838">
    <property type="entry name" value="T3SS_IM_P"/>
</dbReference>
<dbReference type="NCBIfam" id="TIGR01103">
    <property type="entry name" value="fliP"/>
    <property type="match status" value="1"/>
</dbReference>
<dbReference type="NCBIfam" id="NF009438">
    <property type="entry name" value="PRK12797.1"/>
    <property type="match status" value="1"/>
</dbReference>
<dbReference type="PANTHER" id="PTHR30587">
    <property type="entry name" value="FLAGELLAR BIOSYNTHETIC PROTEIN FLIP"/>
    <property type="match status" value="1"/>
</dbReference>
<dbReference type="PANTHER" id="PTHR30587:SF0">
    <property type="entry name" value="FLAGELLAR BIOSYNTHETIC PROTEIN FLIP"/>
    <property type="match status" value="1"/>
</dbReference>
<dbReference type="Pfam" id="PF00813">
    <property type="entry name" value="FliP"/>
    <property type="match status" value="1"/>
</dbReference>
<dbReference type="PRINTS" id="PR00951">
    <property type="entry name" value="FLGBIOSNFLIP"/>
</dbReference>
<dbReference type="PRINTS" id="PR01302">
    <property type="entry name" value="TYPE3IMPPROT"/>
</dbReference>
<dbReference type="PROSITE" id="PS01060">
    <property type="entry name" value="FLIP_1"/>
    <property type="match status" value="1"/>
</dbReference>
<dbReference type="PROSITE" id="PS01061">
    <property type="entry name" value="FLIP_2"/>
    <property type="match status" value="1"/>
</dbReference>
<organism>
    <name type="scientific">Pectobacterium carotovorum subsp. carotovorum</name>
    <name type="common">Erwinia carotovora subsp. carotovora</name>
    <dbReference type="NCBI Taxonomy" id="555"/>
    <lineage>
        <taxon>Bacteria</taxon>
        <taxon>Pseudomonadati</taxon>
        <taxon>Pseudomonadota</taxon>
        <taxon>Gammaproteobacteria</taxon>
        <taxon>Enterobacterales</taxon>
        <taxon>Pectobacteriaceae</taxon>
        <taxon>Pectobacterium</taxon>
    </lineage>
</organism>
<protein>
    <recommendedName>
        <fullName>Flagellar biosynthetic protein FliP</fullName>
    </recommendedName>
    <alternativeName>
        <fullName>Flagellar biosynthetic protein MopC</fullName>
    </alternativeName>
</protein>
<comment type="function">
    <text evidence="1">Plays a role in the flagellum-specific transport system.</text>
</comment>
<comment type="subcellular location">
    <subcellularLocation>
        <location evidence="3">Cell membrane</location>
        <topology evidence="3">Multi-pass membrane protein</topology>
    </subcellularLocation>
    <subcellularLocation>
        <location evidence="1">Bacterial flagellum basal body</location>
    </subcellularLocation>
</comment>
<comment type="similarity">
    <text evidence="3">Belongs to the FliP/MopC/SpaP family.</text>
</comment>
<keyword id="KW-0975">Bacterial flagellum</keyword>
<keyword id="KW-1005">Bacterial flagellum biogenesis</keyword>
<keyword id="KW-1006">Bacterial flagellum protein export</keyword>
<keyword id="KW-1003">Cell membrane</keyword>
<keyword id="KW-0472">Membrane</keyword>
<keyword id="KW-0653">Protein transport</keyword>
<keyword id="KW-0812">Transmembrane</keyword>
<keyword id="KW-1133">Transmembrane helix</keyword>
<keyword id="KW-0813">Transport</keyword>
<accession>P34200</accession>
<evidence type="ECO:0000250" key="1"/>
<evidence type="ECO:0000255" key="2"/>
<evidence type="ECO:0000305" key="3"/>
<sequence>MSALPNYFRITALLRTQRYGLAIGLLFMAPSVWAQLPGIVTQPLPNGGQSWTLSVQTLVLLTSLTFLPAALLMMTSFTRIIIVLSLLRNALGTPTAPPNQVLLGLTLFLTFFVMSPVLNRVYDEAYLPFSQDQISMEVAIERGAEPVREFMLRQTRETDLALFTRLAEIPEIQGPEAVPMRVLLPAFVTSELKTAFQIGFTVFIPFLIIDLVVASVLMALGMMMVPPATISLPFKLMLFVLVDGWQLLLGSLAQSFYS</sequence>
<reference key="1">
    <citation type="journal article" date="1993" name="Mol. Microbiol.">
        <title>A pleiotropic reduced virulence (Rvi-) mutant of Erwinia carotovora subspecies atroseptica is defective in flagella assembly proteins that are conserved in plant and animal bacterial pathogens.</title>
        <authorList>
            <person name="Mulholland V."/>
            <person name="Hinton J.C.D."/>
            <person name="Sidebotham J."/>
            <person name="Toth I.K."/>
            <person name="Hyman L.J."/>
            <person name="Perombelon M.C.M."/>
            <person name="Reeves P.J."/>
            <person name="Salmond G.P.C."/>
        </authorList>
    </citation>
    <scope>NUCLEOTIDE SEQUENCE [GENOMIC DNA]</scope>
    <source>
        <strain>SCRI 193</strain>
    </source>
</reference>
<gene>
    <name type="primary">fliP</name>
    <name type="synonym">mopC</name>
</gene>
<feature type="chain" id="PRO_0000191985" description="Flagellar biosynthetic protein FliP">
    <location>
        <begin position="1"/>
        <end position="258"/>
    </location>
</feature>
<feature type="transmembrane region" description="Helical" evidence="2">
    <location>
        <begin position="20"/>
        <end position="40"/>
    </location>
</feature>
<feature type="transmembrane region" description="Helical" evidence="2">
    <location>
        <begin position="64"/>
        <end position="87"/>
    </location>
</feature>
<feature type="transmembrane region" description="Helical" evidence="2">
    <location>
        <begin position="98"/>
        <end position="118"/>
    </location>
</feature>
<feature type="transmembrane region" description="Helical" evidence="2">
    <location>
        <begin position="194"/>
        <end position="213"/>
    </location>
</feature>
<feature type="transmembrane region" description="Helical" evidence="2">
    <location>
        <begin position="220"/>
        <end position="242"/>
    </location>
</feature>
<name>FLIP_PECCC</name>